<protein>
    <recommendedName>
        <fullName evidence="1">Minor capsid protein L2</fullName>
    </recommendedName>
</protein>
<reference key="1">
    <citation type="journal article" date="1985" name="J. Virol.">
        <title>Molecular cloning and nucleotide sequence of deer papillomavirus.</title>
        <authorList>
            <person name="Groff D.E."/>
            <person name="Lancaster W.D."/>
        </authorList>
    </citation>
    <scope>NUCLEOTIDE SEQUENCE [GENOMIC DNA]</scope>
</reference>
<dbReference type="EMBL" id="M11910">
    <property type="protein sequence ID" value="AAA66846.1"/>
    <property type="molecule type" value="Genomic_DNA"/>
</dbReference>
<dbReference type="PIR" id="A03654">
    <property type="entry name" value="P2WLDP"/>
</dbReference>
<dbReference type="RefSeq" id="NP_041298.1">
    <property type="nucleotide sequence ID" value="NC_001523.1"/>
</dbReference>
<dbReference type="GeneID" id="1488984"/>
<dbReference type="KEGG" id="vg:1488984"/>
<dbReference type="Proteomes" id="UP000009185">
    <property type="component" value="Segment"/>
</dbReference>
<dbReference type="GO" id="GO:0043657">
    <property type="term" value="C:host cell"/>
    <property type="evidence" value="ECO:0007669"/>
    <property type="project" value="GOC"/>
</dbReference>
<dbReference type="GO" id="GO:0044174">
    <property type="term" value="C:host cell endosome"/>
    <property type="evidence" value="ECO:0007669"/>
    <property type="project" value="UniProtKB-KW"/>
</dbReference>
<dbReference type="GO" id="GO:0044177">
    <property type="term" value="C:host cell Golgi apparatus"/>
    <property type="evidence" value="ECO:0007669"/>
    <property type="project" value="UniProtKB-SubCell"/>
</dbReference>
<dbReference type="GO" id="GO:0042025">
    <property type="term" value="C:host cell nucleus"/>
    <property type="evidence" value="ECO:0007669"/>
    <property type="project" value="UniProtKB-SubCell"/>
</dbReference>
<dbReference type="GO" id="GO:0019028">
    <property type="term" value="C:viral capsid"/>
    <property type="evidence" value="ECO:0007669"/>
    <property type="project" value="UniProtKB-UniRule"/>
</dbReference>
<dbReference type="GO" id="GO:0003677">
    <property type="term" value="F:DNA binding"/>
    <property type="evidence" value="ECO:0007669"/>
    <property type="project" value="UniProtKB-UniRule"/>
</dbReference>
<dbReference type="GO" id="GO:0005198">
    <property type="term" value="F:structural molecule activity"/>
    <property type="evidence" value="ECO:0007669"/>
    <property type="project" value="UniProtKB-UniRule"/>
</dbReference>
<dbReference type="GO" id="GO:0075521">
    <property type="term" value="P:microtubule-dependent intracellular transport of viral material towards nucleus"/>
    <property type="evidence" value="ECO:0007669"/>
    <property type="project" value="UniProtKB-UniRule"/>
</dbReference>
<dbReference type="GO" id="GO:0046718">
    <property type="term" value="P:symbiont entry into host cell"/>
    <property type="evidence" value="ECO:0007669"/>
    <property type="project" value="UniProtKB-KW"/>
</dbReference>
<dbReference type="GO" id="GO:0075732">
    <property type="term" value="P:viral penetration into host nucleus"/>
    <property type="evidence" value="ECO:0007669"/>
    <property type="project" value="UniProtKB-KW"/>
</dbReference>
<dbReference type="HAMAP" id="MF_04003">
    <property type="entry name" value="PPV_L2"/>
    <property type="match status" value="1"/>
</dbReference>
<dbReference type="InterPro" id="IPR000784">
    <property type="entry name" value="Late_L2"/>
</dbReference>
<dbReference type="Pfam" id="PF00513">
    <property type="entry name" value="Late_protein_L2"/>
    <property type="match status" value="1"/>
</dbReference>
<feature type="chain" id="PRO_0000133637" description="Minor capsid protein L2">
    <location>
        <begin position="1"/>
        <end position="493"/>
    </location>
</feature>
<feature type="region of interest" description="Disordered" evidence="2">
    <location>
        <begin position="64"/>
        <end position="89"/>
    </location>
</feature>
<feature type="short sequence motif" description="Nuclear localization signal" evidence="1">
    <location>
        <begin position="1"/>
        <end position="10"/>
    </location>
</feature>
<feature type="short sequence motif" description="Nuclear localization signal" evidence="1">
    <location>
        <begin position="483"/>
        <end position="489"/>
    </location>
</feature>
<feature type="compositionally biased region" description="Low complexity" evidence="2">
    <location>
        <begin position="75"/>
        <end position="88"/>
    </location>
</feature>
<feature type="disulfide bond" evidence="1">
    <location>
        <begin position="19"/>
        <end position="24"/>
    </location>
</feature>
<comment type="function">
    <text evidence="1">Minor protein of the capsid that localizes along the inner surface of the virion, within the central cavities beneath the L1 pentamers. Plays a role in capsid stabilization through interaction with the major capsid protein L1. Once the virion enters the host cell, L2 escorts the genomic DNA into the nucleus by promoting escape from the endosomal compartments and traffic through the host Golgi network. Mechanistically, the C-terminus of L2 possesses a cell-penetrating peptide that protudes from the host endosome, interacts with host cytoplasmic retromer cargo and thereby mediates the capsid delivery to the host trans-Golgi network. Plays a role through its interaction with host dynein in the intracellular microtubule-dependent transport of viral capsid toward the nucleus. Mediates the viral genome import into the nucleus through binding to host importins. Once within the nucleus, L2 localizes viral genomes to host PML bodies in order to activate early gene expression for establishment of infection. Later on, promotes late gene expression by interacting with the viral E2 protein and by inhibiting its transcriptional activation functions. During virion assembly, encapsidates the genome by direct interaction with the viral DNA.</text>
</comment>
<comment type="subunit">
    <text evidence="1">Interacts with major capsid protein L1. Interacts with E2; this interaction inhibits E2 transcriptional activity but not the DNA replication function E2. Interacts with host GADD45GIP1. Interacts with host HSPA8; this interaction is required for L2 nuclear translocation. Interacts with host importins KPNB2 and KPNB3. Forms a complex with importin alpha2-beta1 heterodimers via interaction with the importin alpha2 adapter. Interacts with host DYNLT1; this interaction is essential for virus intracellular transport during entry. Interacts (via C-terminus) with host retromer subunits VPS35 and VPS29.</text>
</comment>
<comment type="subcellular location">
    <subcellularLocation>
        <location evidence="1">Virion</location>
    </subcellularLocation>
    <subcellularLocation>
        <location evidence="1">Host nucleus</location>
    </subcellularLocation>
    <subcellularLocation>
        <location evidence="1">Host early endosome</location>
    </subcellularLocation>
    <subcellularLocation>
        <location evidence="1">Host Golgi apparatus</location>
    </subcellularLocation>
</comment>
<comment type="PTM">
    <text evidence="1">Highly phosphorylated.</text>
</comment>
<comment type="similarity">
    <text evidence="1">Belongs to the papillomaviridae L2 protein family.</text>
</comment>
<proteinExistence type="inferred from homology"/>
<organismHost>
    <name type="scientific">Odocoileus virginianus</name>
    <name type="common">White-tailed deer</name>
    <dbReference type="NCBI Taxonomy" id="9874"/>
</organismHost>
<accession>P03110</accession>
<evidence type="ECO:0000255" key="1">
    <source>
        <dbReference type="HAMAP-Rule" id="MF_04003"/>
    </source>
</evidence>
<evidence type="ECO:0000256" key="2">
    <source>
        <dbReference type="SAM" id="MobiDB-lite"/>
    </source>
</evidence>
<sequence length="493" mass="53727">MPPLKRVKRANPYDLYRTCKRWKCPLMSFLKVEGKTVADKYCSMGSMGVYWRLALHGSGRPTQGGYVPLRGGGSSTSLSSRGSGSSTSISRPFAGGIPLETLETVGAFRPGIIEEVAPTLEGVLPDAPAVVTPEAVPVDQGLSGLDVAREVTQESLITFLQPEGPDDIAVLELRPTEHDQTHLISTSTHPNPLFHAPIQQSSIIAETSGSENIFVGGGGVGSTTGEEIELTLFGQPKTSTPEGPINRGRGIFNWFNRTYYTQVPVEDPDEIAAAGSYVFENALYDSKAYKHEQQPWLSRPQDAPEFDFQDAVRLLQGPSGRVGWSRIIRPTSIGTRSGVRVGPLYHLRQSFSTIDEPETIELIPSTVDEEEVLTGVPESAEGPDAEYSDIDLQSIGSDEPLLGTGIIYPLVGGGQIFLCMHRAPVGWSSGTYINHEGQSRDDGEYVIDNGGQSNITPTVVIDGSIALSLEYFRHYYLHPSLLRRKRKRNPIFI</sequence>
<gene>
    <name evidence="1" type="primary">L2</name>
</gene>
<organism>
    <name type="scientific">Odocoileus virginianus papillomavirus 1</name>
    <name type="common">DPV</name>
    <name type="synonym">Deer papillomavirus</name>
    <dbReference type="NCBI Taxonomy" id="2772504"/>
    <lineage>
        <taxon>Viruses</taxon>
        <taxon>Monodnaviria</taxon>
        <taxon>Shotokuvirae</taxon>
        <taxon>Cossaviricota</taxon>
        <taxon>Papovaviricetes</taxon>
        <taxon>Zurhausenvirales</taxon>
        <taxon>Papillomaviridae</taxon>
        <taxon>Firstpapillomavirinae</taxon>
        <taxon>Deltapapillomavirus</taxon>
        <taxon>Deer papillomavirus</taxon>
    </lineage>
</organism>
<name>VL2_OVPVD</name>
<keyword id="KW-0167">Capsid protein</keyword>
<keyword id="KW-1176">Cytoplasmic inwards viral transport</keyword>
<keyword id="KW-1015">Disulfide bond</keyword>
<keyword id="KW-0238">DNA-binding</keyword>
<keyword id="KW-1039">Host endosome</keyword>
<keyword id="KW-1040">Host Golgi apparatus</keyword>
<keyword id="KW-1048">Host nucleus</keyword>
<keyword id="KW-0945">Host-virus interaction</keyword>
<keyword id="KW-0426">Late protein</keyword>
<keyword id="KW-1177">Microtubular inwards viral transport</keyword>
<keyword id="KW-0597">Phosphoprotein</keyword>
<keyword id="KW-1185">Reference proteome</keyword>
<keyword id="KW-1163">Viral penetration into host nucleus</keyword>
<keyword id="KW-0946">Virion</keyword>
<keyword id="KW-1160">Virus entry into host cell</keyword>